<name>YBEY_MYCLB</name>
<comment type="function">
    <text evidence="1">Single strand-specific metallo-endoribonuclease involved in late-stage 70S ribosome quality control and in maturation of the 3' terminus of the 16S rRNA.</text>
</comment>
<comment type="cofactor">
    <cofactor evidence="1">
        <name>Zn(2+)</name>
        <dbReference type="ChEBI" id="CHEBI:29105"/>
    </cofactor>
    <text evidence="1">Binds 1 zinc ion.</text>
</comment>
<comment type="subcellular location">
    <subcellularLocation>
        <location evidence="1">Cytoplasm</location>
    </subcellularLocation>
</comment>
<comment type="similarity">
    <text evidence="1">Belongs to the endoribonuclease YbeY family.</text>
</comment>
<dbReference type="EC" id="3.1.-.-" evidence="1"/>
<dbReference type="EMBL" id="FM211192">
    <property type="protein sequence ID" value="CAR70721.1"/>
    <property type="molecule type" value="Genomic_DNA"/>
</dbReference>
<dbReference type="SMR" id="B8ZUT0"/>
<dbReference type="KEGG" id="mlb:MLBr00628"/>
<dbReference type="HOGENOM" id="CLU_106710_3_2_11"/>
<dbReference type="Proteomes" id="UP000006900">
    <property type="component" value="Chromosome"/>
</dbReference>
<dbReference type="GO" id="GO:0005737">
    <property type="term" value="C:cytoplasm"/>
    <property type="evidence" value="ECO:0007669"/>
    <property type="project" value="UniProtKB-SubCell"/>
</dbReference>
<dbReference type="GO" id="GO:0004222">
    <property type="term" value="F:metalloendopeptidase activity"/>
    <property type="evidence" value="ECO:0007669"/>
    <property type="project" value="InterPro"/>
</dbReference>
<dbReference type="GO" id="GO:0004521">
    <property type="term" value="F:RNA endonuclease activity"/>
    <property type="evidence" value="ECO:0007669"/>
    <property type="project" value="UniProtKB-UniRule"/>
</dbReference>
<dbReference type="GO" id="GO:0008270">
    <property type="term" value="F:zinc ion binding"/>
    <property type="evidence" value="ECO:0007669"/>
    <property type="project" value="UniProtKB-UniRule"/>
</dbReference>
<dbReference type="GO" id="GO:0006364">
    <property type="term" value="P:rRNA processing"/>
    <property type="evidence" value="ECO:0007669"/>
    <property type="project" value="UniProtKB-UniRule"/>
</dbReference>
<dbReference type="Gene3D" id="3.40.390.30">
    <property type="entry name" value="Metalloproteases ('zincins'), catalytic domain"/>
    <property type="match status" value="1"/>
</dbReference>
<dbReference type="HAMAP" id="MF_00009">
    <property type="entry name" value="Endoribonucl_YbeY"/>
    <property type="match status" value="1"/>
</dbReference>
<dbReference type="InterPro" id="IPR023091">
    <property type="entry name" value="MetalPrtase_cat_dom_sf_prd"/>
</dbReference>
<dbReference type="InterPro" id="IPR002036">
    <property type="entry name" value="YbeY"/>
</dbReference>
<dbReference type="InterPro" id="IPR020549">
    <property type="entry name" value="YbeY_CS"/>
</dbReference>
<dbReference type="NCBIfam" id="TIGR00043">
    <property type="entry name" value="rRNA maturation RNase YbeY"/>
    <property type="match status" value="1"/>
</dbReference>
<dbReference type="PANTHER" id="PTHR46986">
    <property type="entry name" value="ENDORIBONUCLEASE YBEY, CHLOROPLASTIC"/>
    <property type="match status" value="1"/>
</dbReference>
<dbReference type="PANTHER" id="PTHR46986:SF1">
    <property type="entry name" value="ENDORIBONUCLEASE YBEY, CHLOROPLASTIC"/>
    <property type="match status" value="1"/>
</dbReference>
<dbReference type="Pfam" id="PF02130">
    <property type="entry name" value="YbeY"/>
    <property type="match status" value="1"/>
</dbReference>
<dbReference type="SUPFAM" id="SSF55486">
    <property type="entry name" value="Metalloproteases ('zincins'), catalytic domain"/>
    <property type="match status" value="1"/>
</dbReference>
<dbReference type="PROSITE" id="PS01306">
    <property type="entry name" value="UPF0054"/>
    <property type="match status" value="1"/>
</dbReference>
<accession>B8ZUT0</accession>
<evidence type="ECO:0000255" key="1">
    <source>
        <dbReference type="HAMAP-Rule" id="MF_00009"/>
    </source>
</evidence>
<gene>
    <name evidence="1" type="primary">ybeY</name>
    <name type="ordered locus">MLBr00628</name>
</gene>
<proteinExistence type="inferred from homology"/>
<protein>
    <recommendedName>
        <fullName evidence="1">Endoribonuclease YbeY</fullName>
        <ecNumber evidence="1">3.1.-.-</ecNumber>
    </recommendedName>
</protein>
<keyword id="KW-0963">Cytoplasm</keyword>
<keyword id="KW-0255">Endonuclease</keyword>
<keyword id="KW-0378">Hydrolase</keyword>
<keyword id="KW-0479">Metal-binding</keyword>
<keyword id="KW-0540">Nuclease</keyword>
<keyword id="KW-0690">Ribosome biogenesis</keyword>
<keyword id="KW-0698">rRNA processing</keyword>
<keyword id="KW-0862">Zinc</keyword>
<reference key="1">
    <citation type="journal article" date="2009" name="Nat. Genet.">
        <title>Comparative genomic and phylogeographic analysis of Mycobacterium leprae.</title>
        <authorList>
            <person name="Monot M."/>
            <person name="Honore N."/>
            <person name="Garnier T."/>
            <person name="Zidane N."/>
            <person name="Sherafi D."/>
            <person name="Paniz-Mondolfi A."/>
            <person name="Matsuoka M."/>
            <person name="Taylor G.M."/>
            <person name="Donoghue H.D."/>
            <person name="Bouwman A."/>
            <person name="Mays S."/>
            <person name="Watson C."/>
            <person name="Lockwood D."/>
            <person name="Khamispour A."/>
            <person name="Dowlati Y."/>
            <person name="Jianping S."/>
            <person name="Rea T.H."/>
            <person name="Vera-Cabrera L."/>
            <person name="Stefani M.M."/>
            <person name="Banu S."/>
            <person name="Macdonald M."/>
            <person name="Sapkota B.R."/>
            <person name="Spencer J.S."/>
            <person name="Thomas J."/>
            <person name="Harshman K."/>
            <person name="Singh P."/>
            <person name="Busso P."/>
            <person name="Gattiker A."/>
            <person name="Rougemont J."/>
            <person name="Brennan P.J."/>
            <person name="Cole S.T."/>
        </authorList>
    </citation>
    <scope>NUCLEOTIDE SEQUENCE [LARGE SCALE GENOMIC DNA]</scope>
    <source>
        <strain>Br4923</strain>
    </source>
</reference>
<sequence length="178" mass="19750">MSVEVSNESGFDVSEVELVSVARFVIIKMDVNPAAELSMVLLDTAAMADLHMRWMDLPGPTDVMSFPMDEFEPGGRPDAAEPGPSMLGDIVLCPEFAAQQAAAEGHSLGHELALLTIHGVLHLLGYDHGEPDEEKEMFALQGRLLEEWVAEQVRAYQHDRQNEKDCRLLYKSGYFGYL</sequence>
<organism>
    <name type="scientific">Mycobacterium leprae (strain Br4923)</name>
    <dbReference type="NCBI Taxonomy" id="561304"/>
    <lineage>
        <taxon>Bacteria</taxon>
        <taxon>Bacillati</taxon>
        <taxon>Actinomycetota</taxon>
        <taxon>Actinomycetes</taxon>
        <taxon>Mycobacteriales</taxon>
        <taxon>Mycobacteriaceae</taxon>
        <taxon>Mycobacterium</taxon>
    </lineage>
</organism>
<feature type="chain" id="PRO_1000199984" description="Endoribonuclease YbeY">
    <location>
        <begin position="1"/>
        <end position="178"/>
    </location>
</feature>
<feature type="binding site" evidence="1">
    <location>
        <position position="118"/>
    </location>
    <ligand>
        <name>Zn(2+)</name>
        <dbReference type="ChEBI" id="CHEBI:29105"/>
        <note>catalytic</note>
    </ligand>
</feature>
<feature type="binding site" evidence="1">
    <location>
        <position position="122"/>
    </location>
    <ligand>
        <name>Zn(2+)</name>
        <dbReference type="ChEBI" id="CHEBI:29105"/>
        <note>catalytic</note>
    </ligand>
</feature>
<feature type="binding site" evidence="1">
    <location>
        <position position="128"/>
    </location>
    <ligand>
        <name>Zn(2+)</name>
        <dbReference type="ChEBI" id="CHEBI:29105"/>
        <note>catalytic</note>
    </ligand>
</feature>